<name>LPTD_ALCBS</name>
<dbReference type="EMBL" id="AM286690">
    <property type="protein sequence ID" value="CAL17493.1"/>
    <property type="molecule type" value="Genomic_DNA"/>
</dbReference>
<dbReference type="RefSeq" id="WP_011589324.1">
    <property type="nucleotide sequence ID" value="NC_008260.1"/>
</dbReference>
<dbReference type="SMR" id="Q0VMV5"/>
<dbReference type="STRING" id="393595.ABO_2045"/>
<dbReference type="KEGG" id="abo:ABO_2045"/>
<dbReference type="eggNOG" id="COG1452">
    <property type="taxonomic scope" value="Bacteria"/>
</dbReference>
<dbReference type="HOGENOM" id="CLU_009039_0_0_6"/>
<dbReference type="OrthoDB" id="9760225at2"/>
<dbReference type="Proteomes" id="UP000008871">
    <property type="component" value="Chromosome"/>
</dbReference>
<dbReference type="GO" id="GO:0009279">
    <property type="term" value="C:cell outer membrane"/>
    <property type="evidence" value="ECO:0007669"/>
    <property type="project" value="UniProtKB-SubCell"/>
</dbReference>
<dbReference type="GO" id="GO:1990351">
    <property type="term" value="C:transporter complex"/>
    <property type="evidence" value="ECO:0007669"/>
    <property type="project" value="TreeGrafter"/>
</dbReference>
<dbReference type="GO" id="GO:0043165">
    <property type="term" value="P:Gram-negative-bacterium-type cell outer membrane assembly"/>
    <property type="evidence" value="ECO:0007669"/>
    <property type="project" value="UniProtKB-UniRule"/>
</dbReference>
<dbReference type="GO" id="GO:0015920">
    <property type="term" value="P:lipopolysaccharide transport"/>
    <property type="evidence" value="ECO:0007669"/>
    <property type="project" value="InterPro"/>
</dbReference>
<dbReference type="HAMAP" id="MF_01411">
    <property type="entry name" value="LPS_assembly_LptD"/>
    <property type="match status" value="1"/>
</dbReference>
<dbReference type="InterPro" id="IPR020889">
    <property type="entry name" value="LipoPS_assembly_LptD"/>
</dbReference>
<dbReference type="InterPro" id="IPR050218">
    <property type="entry name" value="LptD"/>
</dbReference>
<dbReference type="InterPro" id="IPR007543">
    <property type="entry name" value="LptD_C"/>
</dbReference>
<dbReference type="PANTHER" id="PTHR30189">
    <property type="entry name" value="LPS-ASSEMBLY PROTEIN"/>
    <property type="match status" value="1"/>
</dbReference>
<dbReference type="PANTHER" id="PTHR30189:SF1">
    <property type="entry name" value="LPS-ASSEMBLY PROTEIN LPTD"/>
    <property type="match status" value="1"/>
</dbReference>
<dbReference type="Pfam" id="PF04453">
    <property type="entry name" value="LptD"/>
    <property type="match status" value="1"/>
</dbReference>
<proteinExistence type="inferred from homology"/>
<reference key="1">
    <citation type="journal article" date="2006" name="Nat. Biotechnol.">
        <title>Genome sequence of the ubiquitous hydrocarbon-degrading marine bacterium Alcanivorax borkumensis.</title>
        <authorList>
            <person name="Schneiker S."/>
            <person name="Martins dos Santos V.A.P."/>
            <person name="Bartels D."/>
            <person name="Bekel T."/>
            <person name="Brecht M."/>
            <person name="Buhrmester J."/>
            <person name="Chernikova T.N."/>
            <person name="Denaro R."/>
            <person name="Ferrer M."/>
            <person name="Gertler C."/>
            <person name="Goesmann A."/>
            <person name="Golyshina O.V."/>
            <person name="Kaminski F."/>
            <person name="Khachane A.N."/>
            <person name="Lang S."/>
            <person name="Linke B."/>
            <person name="McHardy A.C."/>
            <person name="Meyer F."/>
            <person name="Nechitaylo T."/>
            <person name="Puehler A."/>
            <person name="Regenhardt D."/>
            <person name="Rupp O."/>
            <person name="Sabirova J.S."/>
            <person name="Selbitschka W."/>
            <person name="Yakimov M.M."/>
            <person name="Timmis K.N."/>
            <person name="Vorhoelter F.-J."/>
            <person name="Weidner S."/>
            <person name="Kaiser O."/>
            <person name="Golyshin P.N."/>
        </authorList>
    </citation>
    <scope>NUCLEOTIDE SEQUENCE [LARGE SCALE GENOMIC DNA]</scope>
    <source>
        <strain>ATCC 700651 / DSM 11573 / NCIMB 13689 / SK2</strain>
    </source>
</reference>
<keyword id="KW-0998">Cell outer membrane</keyword>
<keyword id="KW-0472">Membrane</keyword>
<keyword id="KW-1185">Reference proteome</keyword>
<keyword id="KW-0732">Signal</keyword>
<comment type="function">
    <text evidence="1">Together with LptE, is involved in the assembly of lipopolysaccharide (LPS) at the surface of the outer membrane.</text>
</comment>
<comment type="subunit">
    <text evidence="1">Component of the lipopolysaccharide transport and assembly complex. Interacts with LptE and LptA.</text>
</comment>
<comment type="subcellular location">
    <subcellularLocation>
        <location evidence="1">Cell outer membrane</location>
    </subcellularLocation>
</comment>
<comment type="similarity">
    <text evidence="1">Belongs to the LptD family.</text>
</comment>
<sequence>MPLPIPRLLIPALLLASGASLAENDLNWVDREQMATFPAVQQREIPDWCAGIYYNPHVGMPVEGSDTVITADHSTLTQDGLIKLDGDVLIEQPGRRITTDIAELDQATGKFELENGMRMESDQATFIAENMSGQTRRKEGSLQGVRYSLFDTSARGSANYIFLKQNTTTITHGTYTTCAPGSNGWVMQGDRIFLDRDKGWGEANNVVLKVKSVPIFWLPWMTFPIDDRRKSGLLFPTLSVGDSSGLDISQPIYLNLHPQLDATISPRYIDGRGSGLDSEMRYLSRWGEGSLSYGVLFNDRKFDNENRQVGRWTHNGDINRWSLETDFTYVSDDFYFKDLDTGLEISSQTHLPRLGEARYYGRTWQVLGRLQSWQTIDPTLDDADLPYRRLPQLQLTGDPTLVGPVKGLWLSDITAFGRSDSDDSGKATGLRGHMAPALTMRLQNSWGYVEPRARLYHTQYRLDSVDANEEDNPDLTTWGASLDSGLFFERAGNWFGSSFTQTLEPRLFLNKVAYEDQSELPNFDSGELTFSYNSLFRENRFIGYDRIGDEEKLAVGLTSRFLHDGTGREQLRLRVAQGFYFEDRKVVTERAVEDPTDDQTPVIGDARWNFAQDWYLYSEGQWDIEENKRERSNFQIGYNDRERRVVNVGYHDRPADSIRESEVSAILPVHRHWRLIGRWMYDLDNQRSLETMAGTEYRNCCWKLRLLSQRELMDDNGDGNLEADSTIWFQIQMIGLGGFGGQVDSLLERSIPGYRRQYD</sequence>
<feature type="signal peptide" evidence="1">
    <location>
        <begin position="1"/>
        <end position="22"/>
    </location>
</feature>
<feature type="chain" id="PRO_0000281586" description="LPS-assembly protein LptD">
    <location>
        <begin position="23"/>
        <end position="759"/>
    </location>
</feature>
<gene>
    <name evidence="1" type="primary">lptD</name>
    <name type="synonym">imp</name>
    <name type="synonym">ostA</name>
    <name type="ordered locus">ABO_2045</name>
</gene>
<protein>
    <recommendedName>
        <fullName evidence="1">LPS-assembly protein LptD</fullName>
    </recommendedName>
</protein>
<organism>
    <name type="scientific">Alcanivorax borkumensis (strain ATCC 700651 / DSM 11573 / NCIMB 13689 / SK2)</name>
    <dbReference type="NCBI Taxonomy" id="393595"/>
    <lineage>
        <taxon>Bacteria</taxon>
        <taxon>Pseudomonadati</taxon>
        <taxon>Pseudomonadota</taxon>
        <taxon>Gammaproteobacteria</taxon>
        <taxon>Oceanospirillales</taxon>
        <taxon>Alcanivoracaceae</taxon>
        <taxon>Alcanivorax</taxon>
    </lineage>
</organism>
<accession>Q0VMV5</accession>
<evidence type="ECO:0000255" key="1">
    <source>
        <dbReference type="HAMAP-Rule" id="MF_01411"/>
    </source>
</evidence>